<sequence length="710" mass="81645">MLQSMGDGEISISPYDTAWVALVEDDGGGRRQPQFPSSLEWISSNQLADGSWGDAGTFSIFDRILNTLACVVALRSWNIHPHKTDKGIWFMKKNMCRIDEENLEHMPIGFEVALPSLIDIAKKLEIDIPTQTRGLQEIYARREIKLKKIPRDIMHQVPTTLLHSLEGMAGLKWEKLLKLQSQDGSFLFSPSSTAFALQQTRDHGCLKYLTNHIHKFNGGVPNVYPVDLFEHLWAVDRLQRLGLSRYFQPEIEECIAYVHRQWTEKGICWARNSQVEDIDDTAMGFRLLRLHGYEVSADVFRHFKSDGGEFFCFKGQSTQAVTGMYNLYRASQLMFPGENILVDAARFSANFLQLKRANNDLLDKWIITKDLPGEVGYALDVPWYASLPRVETRFYLDQYGGDDDVWIGKTLYRMPYVNNNKYLELAKLDYNNCQALHQQEWQNIQKWYRSCSLGEFGMTERSLLQTYYVAAASVFEPEKSQERLAWAKTAILMETISSHFEFQQLSRDQKRAFITEFEHDSILKYTNGGRYKRRSSLVGTLVRTLNHLSLDILLAHGRDIHQPLKNAWCKWLNSWEEGGDAELLLRTLNLMSGGGRRRRWASEELLSSNPKHEQLLKATIGVCDKLRLFQRRKVQGGNGCMNATGITTVEIESEMRELVKLVVTRSSSEDLDSEIKQNFLTIARSFYYAAYCNQGTINFHIAKVLFEKVL</sequence>
<evidence type="ECO:0000250" key="1">
    <source>
        <dbReference type="UniProtKB" id="C7BKP9"/>
    </source>
</evidence>
<evidence type="ECO:0000250" key="2">
    <source>
        <dbReference type="UniProtKB" id="Q38802"/>
    </source>
</evidence>
<evidence type="ECO:0000250" key="3">
    <source>
        <dbReference type="UniProtKB" id="Q40577"/>
    </source>
</evidence>
<evidence type="ECO:0000269" key="4">
    <source>
    </source>
</evidence>
<evidence type="ECO:0000303" key="5">
    <source>
    </source>
</evidence>
<evidence type="ECO:0000305" key="6"/>
<comment type="function">
    <text evidence="4">Involved in the biosynthesis of ent-kaurene diterpenoids natural products such as oridonin, miltiradiene, eriocalyxin B and nezukol, known to exhibit antitumor, anti-inflammatory and antibacterial activities, and in the production of gibberellins phytohormones (PubMed:22284743). Catalyzes the conversion of (2E,6E,10E)-geranylgeranyl diphosphate (GGPP) to ent-copalyl diphosphate (ent-CPP) (PubMed:22284743).</text>
</comment>
<comment type="catalytic activity">
    <reaction evidence="4">
        <text>(2E,6E,10E)-geranylgeranyl diphosphate = ent-copalyl diphosphate</text>
        <dbReference type="Rhea" id="RHEA:14841"/>
        <dbReference type="ChEBI" id="CHEBI:58553"/>
        <dbReference type="ChEBI" id="CHEBI:58756"/>
        <dbReference type="EC" id="5.5.1.13"/>
    </reaction>
    <physiologicalReaction direction="left-to-right" evidence="4">
        <dbReference type="Rhea" id="RHEA:14842"/>
    </physiologicalReaction>
</comment>
<comment type="cofactor">
    <cofactor evidence="3">
        <name>Mg(2+)</name>
        <dbReference type="ChEBI" id="CHEBI:18420"/>
    </cofactor>
</comment>
<comment type="pathway">
    <text evidence="4">Plant hormone biosynthesis; gibberellin biosynthesis.</text>
</comment>
<comment type="pathway">
    <text evidence="4">Secondary metabolite biosynthesis; terpenoid biosynthesis.</text>
</comment>
<comment type="tissue specificity">
    <text evidence="4">Expressed in germinating seeds and leaves.</text>
</comment>
<comment type="developmental stage">
    <text evidence="4">Accumulates in germinating seeds as well as in leaves.</text>
</comment>
<comment type="domain">
    <text evidence="6">The Asp-Xaa-Asp-Asp (DXDD) motif is important for the catalytic activity, presumably through binding to Mg(2+).</text>
</comment>
<comment type="similarity">
    <text evidence="6">Belongs to the terpene synthase family. Tpsc subfamily.</text>
</comment>
<dbReference type="EC" id="5.5.1.13" evidence="4"/>
<dbReference type="EMBL" id="HQ455833">
    <property type="protein sequence ID" value="AEP03177.1"/>
    <property type="molecule type" value="mRNA"/>
</dbReference>
<dbReference type="SMR" id="G3E4M6"/>
<dbReference type="UniPathway" id="UPA00213"/>
<dbReference type="UniPathway" id="UPA00390"/>
<dbReference type="GO" id="GO:0009507">
    <property type="term" value="C:chloroplast"/>
    <property type="evidence" value="ECO:0007669"/>
    <property type="project" value="TreeGrafter"/>
</dbReference>
<dbReference type="GO" id="GO:0009905">
    <property type="term" value="F:ent-copalyl diphosphate synthase activity"/>
    <property type="evidence" value="ECO:0000314"/>
    <property type="project" value="UniProtKB"/>
</dbReference>
<dbReference type="GO" id="GO:0000287">
    <property type="term" value="F:magnesium ion binding"/>
    <property type="evidence" value="ECO:0007669"/>
    <property type="project" value="TreeGrafter"/>
</dbReference>
<dbReference type="GO" id="GO:0010333">
    <property type="term" value="F:terpene synthase activity"/>
    <property type="evidence" value="ECO:0007669"/>
    <property type="project" value="InterPro"/>
</dbReference>
<dbReference type="GO" id="GO:0009686">
    <property type="term" value="P:gibberellin biosynthetic process"/>
    <property type="evidence" value="ECO:0007669"/>
    <property type="project" value="UniProtKB-UniPathway"/>
</dbReference>
<dbReference type="GO" id="GO:1901946">
    <property type="term" value="P:miltiradiene biosynthetic process"/>
    <property type="evidence" value="ECO:0000314"/>
    <property type="project" value="UniProtKB"/>
</dbReference>
<dbReference type="GO" id="GO:0016114">
    <property type="term" value="P:terpenoid biosynthetic process"/>
    <property type="evidence" value="ECO:0000314"/>
    <property type="project" value="UniProtKB"/>
</dbReference>
<dbReference type="CDD" id="cd00684">
    <property type="entry name" value="Terpene_cyclase_plant_C1"/>
    <property type="match status" value="1"/>
</dbReference>
<dbReference type="FunFam" id="1.50.10.160:FF:000001">
    <property type="entry name" value="Ent-copalyl diphosphate synthase"/>
    <property type="match status" value="1"/>
</dbReference>
<dbReference type="FunFam" id="1.50.10.130:FF:000002">
    <property type="entry name" value="Ent-copalyl diphosphate synthase, chloroplastic"/>
    <property type="match status" value="1"/>
</dbReference>
<dbReference type="Gene3D" id="1.50.10.160">
    <property type="match status" value="1"/>
</dbReference>
<dbReference type="Gene3D" id="1.10.600.10">
    <property type="entry name" value="Farnesyl Diphosphate Synthase"/>
    <property type="match status" value="1"/>
</dbReference>
<dbReference type="Gene3D" id="1.50.10.130">
    <property type="entry name" value="Terpene synthase, N-terminal domain"/>
    <property type="match status" value="1"/>
</dbReference>
<dbReference type="InterPro" id="IPR008949">
    <property type="entry name" value="Isoprenoid_synthase_dom_sf"/>
</dbReference>
<dbReference type="InterPro" id="IPR044814">
    <property type="entry name" value="Terpene_cyclase_plant_C1"/>
</dbReference>
<dbReference type="InterPro" id="IPR001906">
    <property type="entry name" value="Terpene_synth_N"/>
</dbReference>
<dbReference type="InterPro" id="IPR036965">
    <property type="entry name" value="Terpene_synth_N_sf"/>
</dbReference>
<dbReference type="InterPro" id="IPR050148">
    <property type="entry name" value="Terpene_synthase-like"/>
</dbReference>
<dbReference type="InterPro" id="IPR008930">
    <property type="entry name" value="Terpenoid_cyclase/PrenylTrfase"/>
</dbReference>
<dbReference type="PANTHER" id="PTHR31739">
    <property type="entry name" value="ENT-COPALYL DIPHOSPHATE SYNTHASE, CHLOROPLASTIC"/>
    <property type="match status" value="1"/>
</dbReference>
<dbReference type="PANTHER" id="PTHR31739:SF4">
    <property type="entry name" value="ENT-COPALYL DIPHOSPHATE SYNTHASE, CHLOROPLASTIC"/>
    <property type="match status" value="1"/>
</dbReference>
<dbReference type="Pfam" id="PF01397">
    <property type="entry name" value="Terpene_synth"/>
    <property type="match status" value="1"/>
</dbReference>
<dbReference type="SFLD" id="SFLDG01014">
    <property type="entry name" value="Terpene_Cyclase_Like_1_N-term"/>
    <property type="match status" value="1"/>
</dbReference>
<dbReference type="SFLD" id="SFLDG01605">
    <property type="entry name" value="Terpene_Cyclase_Like_1_N-term"/>
    <property type="match status" value="1"/>
</dbReference>
<dbReference type="SUPFAM" id="SSF48239">
    <property type="entry name" value="Terpenoid cyclases/Protein prenyltransferases"/>
    <property type="match status" value="2"/>
</dbReference>
<dbReference type="SUPFAM" id="SSF48576">
    <property type="entry name" value="Terpenoid synthases"/>
    <property type="match status" value="1"/>
</dbReference>
<gene>
    <name evidence="5" type="primary">CPS1</name>
</gene>
<name>CPS1_ISOER</name>
<accession>G3E4M6</accession>
<protein>
    <recommendedName>
        <fullName evidence="5">Ent-copalyl diphosphate synthase 1</fullName>
        <shortName evidence="5">IeCPS1</shortName>
        <ecNumber evidence="4">5.5.1.13</ecNumber>
    </recommendedName>
</protein>
<keyword id="KW-0413">Isomerase</keyword>
<keyword id="KW-0460">Magnesium</keyword>
<keyword id="KW-0479">Metal-binding</keyword>
<organism>
    <name type="scientific">Isodon eriocalyx</name>
    <name type="common">Plectranthus eriocalyx</name>
    <dbReference type="NCBI Taxonomy" id="662907"/>
    <lineage>
        <taxon>Eukaryota</taxon>
        <taxon>Viridiplantae</taxon>
        <taxon>Streptophyta</taxon>
        <taxon>Embryophyta</taxon>
        <taxon>Tracheophyta</taxon>
        <taxon>Spermatophyta</taxon>
        <taxon>Magnoliopsida</taxon>
        <taxon>eudicotyledons</taxon>
        <taxon>Gunneridae</taxon>
        <taxon>Pentapetalae</taxon>
        <taxon>asterids</taxon>
        <taxon>lamiids</taxon>
        <taxon>Lamiales</taxon>
        <taxon>Lamiaceae</taxon>
        <taxon>Nepetoideae</taxon>
        <taxon>Ocimeae</taxon>
        <taxon>Isodoninae</taxon>
        <taxon>Isodon</taxon>
    </lineage>
</organism>
<proteinExistence type="evidence at protein level"/>
<feature type="chain" id="PRO_0000452377" description="Ent-copalyl diphosphate synthase 1">
    <location>
        <begin position="1"/>
        <end position="710"/>
    </location>
</feature>
<feature type="short sequence motif" description="DXDD motif" evidence="6">
    <location>
        <begin position="277"/>
        <end position="280"/>
    </location>
</feature>
<feature type="binding site" evidence="2">
    <location>
        <position position="145"/>
    </location>
    <ligand>
        <name>substrate</name>
    </ligand>
</feature>
<feature type="binding site" evidence="1">
    <location>
        <position position="277"/>
    </location>
    <ligand>
        <name>Mg(2+)</name>
        <dbReference type="ChEBI" id="CHEBI:18420"/>
    </ligand>
</feature>
<feature type="binding site" evidence="1">
    <location>
        <position position="279"/>
    </location>
    <ligand>
        <name>Mg(2+)</name>
        <dbReference type="ChEBI" id="CHEBI:18420"/>
    </ligand>
</feature>
<feature type="binding site" evidence="2">
    <location>
        <position position="364"/>
    </location>
    <ligand>
        <name>substrate</name>
    </ligand>
</feature>
<reference key="1">
    <citation type="journal article" date="2012" name="Phytochemistry">
        <title>IeCPS2 is potentially involved in the biosynthesis of pharmacologically active Isodon diterpenoids rather than gibberellin.</title>
        <authorList>
            <person name="Li J.-L."/>
            <person name="Chen Q.-Q."/>
            <person name="Jin Q.-P."/>
            <person name="Gao J."/>
            <person name="Zhao P.-J."/>
            <person name="Lu S."/>
            <person name="Zeng Y."/>
        </authorList>
    </citation>
    <scope>NUCLEOTIDE SEQUENCE [MRNA]</scope>
    <scope>FUNCTION</scope>
    <scope>PATHWAY</scope>
    <scope>CATALYTIC ACTIVITY</scope>
    <scope>TISSUE SPECIFICITY</scope>
    <scope>DEVELOPMENTAL STAGE</scope>
</reference>